<keyword id="KW-0025">Alternative splicing</keyword>
<keyword id="KW-0067">ATP-binding</keyword>
<keyword id="KW-0963">Cytoplasm</keyword>
<keyword id="KW-1017">Isopeptide bond</keyword>
<keyword id="KW-0547">Nucleotide-binding</keyword>
<keyword id="KW-0539">Nucleus</keyword>
<keyword id="KW-0647">Proteasome</keyword>
<keyword id="KW-1185">Reference proteome</keyword>
<keyword id="KW-0832">Ubl conjugation</keyword>
<reference key="1">
    <citation type="journal article" date="2000" name="Nature">
        <title>Sequence and analysis of chromosome 1 of the plant Arabidopsis thaliana.</title>
        <authorList>
            <person name="Theologis A."/>
            <person name="Ecker J.R."/>
            <person name="Palm C.J."/>
            <person name="Federspiel N.A."/>
            <person name="Kaul S."/>
            <person name="White O."/>
            <person name="Alonso J."/>
            <person name="Altafi H."/>
            <person name="Araujo R."/>
            <person name="Bowman C.L."/>
            <person name="Brooks S.Y."/>
            <person name="Buehler E."/>
            <person name="Chan A."/>
            <person name="Chao Q."/>
            <person name="Chen H."/>
            <person name="Cheuk R.F."/>
            <person name="Chin C.W."/>
            <person name="Chung M.K."/>
            <person name="Conn L."/>
            <person name="Conway A.B."/>
            <person name="Conway A.R."/>
            <person name="Creasy T.H."/>
            <person name="Dewar K."/>
            <person name="Dunn P."/>
            <person name="Etgu P."/>
            <person name="Feldblyum T.V."/>
            <person name="Feng J.-D."/>
            <person name="Fong B."/>
            <person name="Fujii C.Y."/>
            <person name="Gill J.E."/>
            <person name="Goldsmith A.D."/>
            <person name="Haas B."/>
            <person name="Hansen N.F."/>
            <person name="Hughes B."/>
            <person name="Huizar L."/>
            <person name="Hunter J.L."/>
            <person name="Jenkins J."/>
            <person name="Johnson-Hopson C."/>
            <person name="Khan S."/>
            <person name="Khaykin E."/>
            <person name="Kim C.J."/>
            <person name="Koo H.L."/>
            <person name="Kremenetskaia I."/>
            <person name="Kurtz D.B."/>
            <person name="Kwan A."/>
            <person name="Lam B."/>
            <person name="Langin-Hooper S."/>
            <person name="Lee A."/>
            <person name="Lee J.M."/>
            <person name="Lenz C.A."/>
            <person name="Li J.H."/>
            <person name="Li Y.-P."/>
            <person name="Lin X."/>
            <person name="Liu S.X."/>
            <person name="Liu Z.A."/>
            <person name="Luros J.S."/>
            <person name="Maiti R."/>
            <person name="Marziali A."/>
            <person name="Militscher J."/>
            <person name="Miranda M."/>
            <person name="Nguyen M."/>
            <person name="Nierman W.C."/>
            <person name="Osborne B.I."/>
            <person name="Pai G."/>
            <person name="Peterson J."/>
            <person name="Pham P.K."/>
            <person name="Rizzo M."/>
            <person name="Rooney T."/>
            <person name="Rowley D."/>
            <person name="Sakano H."/>
            <person name="Salzberg S.L."/>
            <person name="Schwartz J.R."/>
            <person name="Shinn P."/>
            <person name="Southwick A.M."/>
            <person name="Sun H."/>
            <person name="Tallon L.J."/>
            <person name="Tambunga G."/>
            <person name="Toriumi M.J."/>
            <person name="Town C.D."/>
            <person name="Utterback T."/>
            <person name="Van Aken S."/>
            <person name="Vaysberg M."/>
            <person name="Vysotskaia V.S."/>
            <person name="Walker M."/>
            <person name="Wu D."/>
            <person name="Yu G."/>
            <person name="Fraser C.M."/>
            <person name="Venter J.C."/>
            <person name="Davis R.W."/>
        </authorList>
    </citation>
    <scope>NUCLEOTIDE SEQUENCE [LARGE SCALE GENOMIC DNA]</scope>
    <source>
        <strain>cv. Columbia</strain>
    </source>
</reference>
<reference key="2">
    <citation type="journal article" date="2017" name="Plant J.">
        <title>Araport11: a complete reannotation of the Arabidopsis thaliana reference genome.</title>
        <authorList>
            <person name="Cheng C.Y."/>
            <person name="Krishnakumar V."/>
            <person name="Chan A.P."/>
            <person name="Thibaud-Nissen F."/>
            <person name="Schobel S."/>
            <person name="Town C.D."/>
        </authorList>
    </citation>
    <scope>GENOME REANNOTATION</scope>
    <source>
        <strain>cv. Columbia</strain>
    </source>
</reference>
<reference key="3">
    <citation type="journal article" date="1999" name="Plant J.">
        <title>Structural and functional analysis of the six regulatory particle triple-A ATPase subunits from the Arabidopsis 26S proteasome.</title>
        <authorList>
            <person name="Fu H."/>
            <person name="Doelling J.H."/>
            <person name="Rubin D.M."/>
            <person name="Vierstra R.D."/>
        </authorList>
    </citation>
    <scope>GENE FAMILY</scope>
    <scope>NOMENCLATURE</scope>
</reference>
<reference key="4">
    <citation type="journal article" date="2010" name="J. Biol. Chem.">
        <title>Affinity purification of the Arabidopsis 26 S proteasome reveals a diverse array of plant proteolytic complexes.</title>
        <authorList>
            <person name="Book A.J."/>
            <person name="Gladman N.P."/>
            <person name="Lee S.S."/>
            <person name="Scalf M."/>
            <person name="Smith L.M."/>
            <person name="Vierstra R.D."/>
        </authorList>
    </citation>
    <scope>CHARACTERIZATION OF THE 26S PROTEASOME COMPLEX</scope>
    <scope>SUBUNIT</scope>
</reference>
<gene>
    <name type="primary">RPT1B</name>
    <name type="ordered locus">At1g53780</name>
    <name type="ORF">T18A20.2</name>
</gene>
<organism>
    <name type="scientific">Arabidopsis thaliana</name>
    <name type="common">Mouse-ear cress</name>
    <dbReference type="NCBI Taxonomy" id="3702"/>
    <lineage>
        <taxon>Eukaryota</taxon>
        <taxon>Viridiplantae</taxon>
        <taxon>Streptophyta</taxon>
        <taxon>Embryophyta</taxon>
        <taxon>Tracheophyta</taxon>
        <taxon>Spermatophyta</taxon>
        <taxon>Magnoliopsida</taxon>
        <taxon>eudicotyledons</taxon>
        <taxon>Gunneridae</taxon>
        <taxon>Pentapetalae</taxon>
        <taxon>rosids</taxon>
        <taxon>malvids</taxon>
        <taxon>Brassicales</taxon>
        <taxon>Brassicaceae</taxon>
        <taxon>Camelineae</taxon>
        <taxon>Arabidopsis</taxon>
    </lineage>
</organism>
<feature type="chain" id="PRO_0000391486" description="26S proteasome regulatory subunit 7 homolog B">
    <location>
        <begin position="1"/>
        <end position="464"/>
    </location>
</feature>
<feature type="binding site" evidence="3">
    <location>
        <begin position="246"/>
        <end position="253"/>
    </location>
    <ligand>
        <name>ATP</name>
        <dbReference type="ChEBI" id="CHEBI:30616"/>
    </ligand>
</feature>
<feature type="cross-link" description="Glycyl lysine isopeptide (Lys-Gly) (interchain with G-Cter in ubiquitin)" evidence="2">
    <location>
        <position position="452"/>
    </location>
</feature>
<name>PRS7B_ARATH</name>
<comment type="function">
    <text>The 26S proteasome is involved in the ATP-dependent degradation of ubiquitinated proteins. The regulatory (or ATPase) complex confers ATP dependency and substrate specificity to the 26S complex.</text>
</comment>
<comment type="subunit">
    <text evidence="4">Component of the 19S regulatory particle (RP/PA700) base subcomplex of the 26S proteasome. The 26S proteasome is composed of a core protease (CP), known as the 20S proteasome, capped at one or both ends by the 19S regulatory particle (RP/PA700). The RP/PA700 complex is composed of at least 17 different subunits in two subcomplexes, the base and the lid, which form the portions proximal and distal to the 20S proteolytic core, respectively.</text>
</comment>
<comment type="subcellular location">
    <subcellularLocation>
        <location evidence="1">Cytoplasm</location>
    </subcellularLocation>
    <subcellularLocation>
        <location evidence="1">Nucleus</location>
    </subcellularLocation>
</comment>
<comment type="alternative products">
    <event type="alternative splicing"/>
    <isoform>
        <id>Q9SSB4-1</id>
        <name>1</name>
        <sequence type="displayed"/>
    </isoform>
    <text>A number of isoforms are produced. According to EST sequences.</text>
</comment>
<comment type="similarity">
    <text evidence="5">Belongs to the AAA ATPase family.</text>
</comment>
<comment type="caution">
    <text evidence="6">Was not identified as subunit of the 26S proteasome complex.</text>
</comment>
<comment type="sequence caution" evidence="5">
    <conflict type="erroneous gene model prediction">
        <sequence resource="EMBL-CDS" id="AAF02853"/>
    </conflict>
</comment>
<dbReference type="EMBL" id="AC009324">
    <property type="protein sequence ID" value="AAF02853.1"/>
    <property type="status" value="ALT_SEQ"/>
    <property type="molecule type" value="Genomic_DNA"/>
</dbReference>
<dbReference type="EMBL" id="CP002684">
    <property type="status" value="NOT_ANNOTATED_CDS"/>
    <property type="molecule type" value="Genomic_DNA"/>
</dbReference>
<dbReference type="PIR" id="H96577">
    <property type="entry name" value="H96577"/>
</dbReference>
<dbReference type="SMR" id="Q9SSB4"/>
<dbReference type="BioGRID" id="27040">
    <property type="interactions" value="113"/>
</dbReference>
<dbReference type="FunCoup" id="Q9SSB4">
    <property type="interactions" value="1517"/>
</dbReference>
<dbReference type="IntAct" id="Q9SSB4">
    <property type="interactions" value="1"/>
</dbReference>
<dbReference type="STRING" id="3702.Q9SSB4"/>
<dbReference type="PaxDb" id="3702-AT1G53780.2"/>
<dbReference type="Araport" id="AT1G53780"/>
<dbReference type="TAIR" id="AT1G53780"/>
<dbReference type="eggNOG" id="KOG0415">
    <property type="taxonomic scope" value="Eukaryota"/>
</dbReference>
<dbReference type="eggNOG" id="KOG0729">
    <property type="taxonomic scope" value="Eukaryota"/>
</dbReference>
<dbReference type="InParanoid" id="Q9SSB4"/>
<dbReference type="PhylomeDB" id="Q9SSB4"/>
<dbReference type="PRO" id="PR:Q9SSB4"/>
<dbReference type="Proteomes" id="UP000006548">
    <property type="component" value="Chromosome 1"/>
</dbReference>
<dbReference type="ExpressionAtlas" id="Q9SSB4">
    <property type="expression patterns" value="baseline and differential"/>
</dbReference>
<dbReference type="GO" id="GO:0005737">
    <property type="term" value="C:cytoplasm"/>
    <property type="evidence" value="ECO:0007669"/>
    <property type="project" value="UniProtKB-SubCell"/>
</dbReference>
<dbReference type="GO" id="GO:0005634">
    <property type="term" value="C:nucleus"/>
    <property type="evidence" value="ECO:0007669"/>
    <property type="project" value="UniProtKB-SubCell"/>
</dbReference>
<dbReference type="GO" id="GO:0008540">
    <property type="term" value="C:proteasome regulatory particle, base subcomplex"/>
    <property type="evidence" value="ECO:0000318"/>
    <property type="project" value="GO_Central"/>
</dbReference>
<dbReference type="GO" id="GO:0005524">
    <property type="term" value="F:ATP binding"/>
    <property type="evidence" value="ECO:0007669"/>
    <property type="project" value="UniProtKB-KW"/>
</dbReference>
<dbReference type="GO" id="GO:0016887">
    <property type="term" value="F:ATP hydrolysis activity"/>
    <property type="evidence" value="ECO:0007669"/>
    <property type="project" value="InterPro"/>
</dbReference>
<dbReference type="GO" id="GO:0036402">
    <property type="term" value="F:proteasome-activating activity"/>
    <property type="evidence" value="ECO:0000318"/>
    <property type="project" value="GO_Central"/>
</dbReference>
<dbReference type="GO" id="GO:0043161">
    <property type="term" value="P:proteasome-mediated ubiquitin-dependent protein catabolic process"/>
    <property type="evidence" value="ECO:0000318"/>
    <property type="project" value="GO_Central"/>
</dbReference>
<dbReference type="CDD" id="cd19502">
    <property type="entry name" value="RecA-like_PAN_like"/>
    <property type="match status" value="1"/>
</dbReference>
<dbReference type="FunFam" id="1.10.8.60:FF:000005">
    <property type="entry name" value="26S protease regulatory subunit 7"/>
    <property type="match status" value="1"/>
</dbReference>
<dbReference type="FunFam" id="2.40.50.140:FF:000075">
    <property type="entry name" value="26S protease regulatory subunit 7"/>
    <property type="match status" value="1"/>
</dbReference>
<dbReference type="FunFam" id="3.40.50.300:FF:000027">
    <property type="entry name" value="26S protease regulatory subunit 7"/>
    <property type="match status" value="1"/>
</dbReference>
<dbReference type="Gene3D" id="1.10.8.60">
    <property type="match status" value="1"/>
</dbReference>
<dbReference type="Gene3D" id="2.40.50.140">
    <property type="entry name" value="Nucleic acid-binding proteins"/>
    <property type="match status" value="1"/>
</dbReference>
<dbReference type="Gene3D" id="3.40.50.300">
    <property type="entry name" value="P-loop containing nucleotide triphosphate hydrolases"/>
    <property type="match status" value="1"/>
</dbReference>
<dbReference type="InterPro" id="IPR050221">
    <property type="entry name" value="26S_Proteasome_ATPase"/>
</dbReference>
<dbReference type="InterPro" id="IPR003593">
    <property type="entry name" value="AAA+_ATPase"/>
</dbReference>
<dbReference type="InterPro" id="IPR041569">
    <property type="entry name" value="AAA_lid_3"/>
</dbReference>
<dbReference type="InterPro" id="IPR003959">
    <property type="entry name" value="ATPase_AAA_core"/>
</dbReference>
<dbReference type="InterPro" id="IPR003960">
    <property type="entry name" value="ATPase_AAA_CS"/>
</dbReference>
<dbReference type="InterPro" id="IPR012340">
    <property type="entry name" value="NA-bd_OB-fold"/>
</dbReference>
<dbReference type="InterPro" id="IPR027417">
    <property type="entry name" value="P-loop_NTPase"/>
</dbReference>
<dbReference type="InterPro" id="IPR048723">
    <property type="entry name" value="PRS7-like_OB"/>
</dbReference>
<dbReference type="PANTHER" id="PTHR23073">
    <property type="entry name" value="26S PROTEASOME REGULATORY SUBUNIT"/>
    <property type="match status" value="1"/>
</dbReference>
<dbReference type="Pfam" id="PF00004">
    <property type="entry name" value="AAA"/>
    <property type="match status" value="1"/>
</dbReference>
<dbReference type="Pfam" id="PF17862">
    <property type="entry name" value="AAA_lid_3"/>
    <property type="match status" value="1"/>
</dbReference>
<dbReference type="Pfam" id="PF21236">
    <property type="entry name" value="PRS7_OB"/>
    <property type="match status" value="1"/>
</dbReference>
<dbReference type="SMART" id="SM00382">
    <property type="entry name" value="AAA"/>
    <property type="match status" value="1"/>
</dbReference>
<dbReference type="SUPFAM" id="SSF52540">
    <property type="entry name" value="P-loop containing nucleoside triphosphate hydrolases"/>
    <property type="match status" value="1"/>
</dbReference>
<dbReference type="PROSITE" id="PS00674">
    <property type="entry name" value="AAA"/>
    <property type="match status" value="1"/>
</dbReference>
<sequence>MIIRDIMEDPENEGPHNMRSDFEPLLSVLRLRDYETGDIIEFDSTEASEEALSDITEFGSTEASEAHFEEPYSARIKKVEKEINELAEKICNLGIKESDTGLAPPNQWDLVSDKQMMQEEQPLLVATCTQIISPNTEDAKYVVDIKKIGKYVVGLGDKASPTDIEAGMRVGVDQKKYQIQIPLPPKIDPSVTMMTVEEKPDATYSDIGGCKEQIEKIREVVELPMLHPEKFVRLGIDPPKGVLCYGPPGSGKTLVARAVANRTGACFIRVVGSELVQKYIGEGARMVRELFQMARSKKACILFFDEIDAIGGARFDDGVGSDNEVQRTMLEILYQLDGFDARGNIKVLMATNRPDILDPALLRPGRLDRKVEFCLPDLEGRTQIFKIHTRTMSCERDIRFELLAGLCPNSTGADIRSVCIEAGMYAIGARRKSVTEKDFLDAVNKVVKGYQKFSATPKYMAYYI</sequence>
<evidence type="ECO:0000250" key="1"/>
<evidence type="ECO:0000250" key="2">
    <source>
        <dbReference type="UniProtKB" id="Q9SEI2"/>
    </source>
</evidence>
<evidence type="ECO:0000255" key="3"/>
<evidence type="ECO:0000269" key="4">
    <source>
    </source>
</evidence>
<evidence type="ECO:0000305" key="5"/>
<evidence type="ECO:0000305" key="6">
    <source>
    </source>
</evidence>
<protein>
    <recommendedName>
        <fullName>26S proteasome regulatory subunit 7 homolog B</fullName>
    </recommendedName>
    <alternativeName>
        <fullName>26S proteasome AAA-ATPase subunit RPT1b</fullName>
    </alternativeName>
    <alternativeName>
        <fullName>26S proteasome subunit 7 homolog B</fullName>
    </alternativeName>
    <alternativeName>
        <fullName>Regulatory particle triple-A ATPase subunit 1b</fullName>
    </alternativeName>
</protein>
<accession>Q9SSB4</accession>
<accession>F4HTC4</accession>
<proteinExistence type="evidence at protein level"/>